<sequence length="416" mass="45731">MAYLFTSESVSEGHPDKVADQISDALIDNFLAFDADSKVACETLVTTGQVILAGEVKSNTYLDVQQIAREVIRKIGYTKSEYMFEANSCGILSAIHEQSADINQGVDRAKPEEQGAGDQGMMFGYATNETENFMPLALDLSHKLLQELAILRRENKEITYLRPDAKSQVTLEYSDDNKPTRIDAIVISTQHDDFDEEAAMLAKIKKDVIEILIPRIIAKNPEHAHLFNDKINYHINPTGKFVIGGPHGDTGLTGRKIIVDTYGGKGAHGGGAFSGKDPSKVDRSAAYATRHIAKNLVAAGVADEILVQVSYAIGVAEPMGIFIETYGTSKVNLTNGEIAKKVEAIFDMRPYFIEQRLKLRNPIYSETAAYGHMGRKPETVTKTFSAPGGNEKTVTVELFTWEKLDFVDQVKTAFGL</sequence>
<evidence type="ECO:0000255" key="1">
    <source>
        <dbReference type="HAMAP-Rule" id="MF_00086"/>
    </source>
</evidence>
<name>METK_FLAJ1</name>
<gene>
    <name evidence="1" type="primary">metK</name>
    <name type="ordered locus">Fjoh_1489</name>
</gene>
<feature type="chain" id="PRO_1000075375" description="S-adenosylmethionine synthase">
    <location>
        <begin position="1"/>
        <end position="416"/>
    </location>
</feature>
<feature type="region of interest" description="Flexible loop" evidence="1">
    <location>
        <begin position="98"/>
        <end position="108"/>
    </location>
</feature>
<feature type="binding site" description="in other chain" evidence="1">
    <location>
        <position position="14"/>
    </location>
    <ligand>
        <name>ATP</name>
        <dbReference type="ChEBI" id="CHEBI:30616"/>
        <note>ligand shared between two neighboring subunits</note>
    </ligand>
</feature>
<feature type="binding site" evidence="1">
    <location>
        <position position="16"/>
    </location>
    <ligand>
        <name>Mg(2+)</name>
        <dbReference type="ChEBI" id="CHEBI:18420"/>
    </ligand>
</feature>
<feature type="binding site" evidence="1">
    <location>
        <position position="42"/>
    </location>
    <ligand>
        <name>K(+)</name>
        <dbReference type="ChEBI" id="CHEBI:29103"/>
    </ligand>
</feature>
<feature type="binding site" description="in other chain" evidence="1">
    <location>
        <position position="55"/>
    </location>
    <ligand>
        <name>L-methionine</name>
        <dbReference type="ChEBI" id="CHEBI:57844"/>
        <note>ligand shared between two neighboring subunits</note>
    </ligand>
</feature>
<feature type="binding site" description="in other chain" evidence="1">
    <location>
        <position position="98"/>
    </location>
    <ligand>
        <name>L-methionine</name>
        <dbReference type="ChEBI" id="CHEBI:57844"/>
        <note>ligand shared between two neighboring subunits</note>
    </ligand>
</feature>
<feature type="binding site" description="in other chain" evidence="1">
    <location>
        <begin position="164"/>
        <end position="166"/>
    </location>
    <ligand>
        <name>ATP</name>
        <dbReference type="ChEBI" id="CHEBI:30616"/>
        <note>ligand shared between two neighboring subunits</note>
    </ligand>
</feature>
<feature type="binding site" description="in other chain" evidence="1">
    <location>
        <begin position="240"/>
        <end position="241"/>
    </location>
    <ligand>
        <name>ATP</name>
        <dbReference type="ChEBI" id="CHEBI:30616"/>
        <note>ligand shared between two neighboring subunits</note>
    </ligand>
</feature>
<feature type="binding site" evidence="1">
    <location>
        <position position="249"/>
    </location>
    <ligand>
        <name>ATP</name>
        <dbReference type="ChEBI" id="CHEBI:30616"/>
        <note>ligand shared between two neighboring subunits</note>
    </ligand>
</feature>
<feature type="binding site" evidence="1">
    <location>
        <position position="249"/>
    </location>
    <ligand>
        <name>L-methionine</name>
        <dbReference type="ChEBI" id="CHEBI:57844"/>
        <note>ligand shared between two neighboring subunits</note>
    </ligand>
</feature>
<feature type="binding site" description="in other chain" evidence="1">
    <location>
        <begin position="255"/>
        <end position="256"/>
    </location>
    <ligand>
        <name>ATP</name>
        <dbReference type="ChEBI" id="CHEBI:30616"/>
        <note>ligand shared between two neighboring subunits</note>
    </ligand>
</feature>
<feature type="binding site" evidence="1">
    <location>
        <position position="272"/>
    </location>
    <ligand>
        <name>ATP</name>
        <dbReference type="ChEBI" id="CHEBI:30616"/>
        <note>ligand shared between two neighboring subunits</note>
    </ligand>
</feature>
<feature type="binding site" evidence="1">
    <location>
        <position position="276"/>
    </location>
    <ligand>
        <name>ATP</name>
        <dbReference type="ChEBI" id="CHEBI:30616"/>
        <note>ligand shared between two neighboring subunits</note>
    </ligand>
</feature>
<feature type="binding site" description="in other chain" evidence="1">
    <location>
        <position position="280"/>
    </location>
    <ligand>
        <name>L-methionine</name>
        <dbReference type="ChEBI" id="CHEBI:57844"/>
        <note>ligand shared between two neighboring subunits</note>
    </ligand>
</feature>
<proteinExistence type="inferred from homology"/>
<dbReference type="EC" id="2.5.1.6" evidence="1"/>
<dbReference type="EMBL" id="CP000685">
    <property type="protein sequence ID" value="ABQ04521.1"/>
    <property type="molecule type" value="Genomic_DNA"/>
</dbReference>
<dbReference type="RefSeq" id="WP_012023567.1">
    <property type="nucleotide sequence ID" value="NZ_MUGZ01000017.1"/>
</dbReference>
<dbReference type="SMR" id="A5FJU1"/>
<dbReference type="STRING" id="376686.Fjoh_1489"/>
<dbReference type="KEGG" id="fjo:Fjoh_1489"/>
<dbReference type="eggNOG" id="COG0192">
    <property type="taxonomic scope" value="Bacteria"/>
</dbReference>
<dbReference type="HOGENOM" id="CLU_041802_1_1_10"/>
<dbReference type="OrthoDB" id="9801686at2"/>
<dbReference type="UniPathway" id="UPA00315">
    <property type="reaction ID" value="UER00080"/>
</dbReference>
<dbReference type="Proteomes" id="UP000006694">
    <property type="component" value="Chromosome"/>
</dbReference>
<dbReference type="GO" id="GO:0005737">
    <property type="term" value="C:cytoplasm"/>
    <property type="evidence" value="ECO:0007669"/>
    <property type="project" value="UniProtKB-SubCell"/>
</dbReference>
<dbReference type="GO" id="GO:0005524">
    <property type="term" value="F:ATP binding"/>
    <property type="evidence" value="ECO:0007669"/>
    <property type="project" value="UniProtKB-UniRule"/>
</dbReference>
<dbReference type="GO" id="GO:0000287">
    <property type="term" value="F:magnesium ion binding"/>
    <property type="evidence" value="ECO:0007669"/>
    <property type="project" value="UniProtKB-UniRule"/>
</dbReference>
<dbReference type="GO" id="GO:0004478">
    <property type="term" value="F:methionine adenosyltransferase activity"/>
    <property type="evidence" value="ECO:0007669"/>
    <property type="project" value="UniProtKB-UniRule"/>
</dbReference>
<dbReference type="GO" id="GO:0006730">
    <property type="term" value="P:one-carbon metabolic process"/>
    <property type="evidence" value="ECO:0007669"/>
    <property type="project" value="UniProtKB-KW"/>
</dbReference>
<dbReference type="GO" id="GO:0006556">
    <property type="term" value="P:S-adenosylmethionine biosynthetic process"/>
    <property type="evidence" value="ECO:0007669"/>
    <property type="project" value="UniProtKB-UniRule"/>
</dbReference>
<dbReference type="CDD" id="cd18079">
    <property type="entry name" value="S-AdoMet_synt"/>
    <property type="match status" value="1"/>
</dbReference>
<dbReference type="FunFam" id="3.30.300.10:FF:000020">
    <property type="entry name" value="S-adenosylmethionine synthase"/>
    <property type="match status" value="1"/>
</dbReference>
<dbReference type="Gene3D" id="3.30.300.10">
    <property type="match status" value="3"/>
</dbReference>
<dbReference type="HAMAP" id="MF_00086">
    <property type="entry name" value="S_AdoMet_synth1"/>
    <property type="match status" value="1"/>
</dbReference>
<dbReference type="InterPro" id="IPR022631">
    <property type="entry name" value="ADOMET_SYNTHASE_CS"/>
</dbReference>
<dbReference type="InterPro" id="IPR022630">
    <property type="entry name" value="S-AdoMet_synt_C"/>
</dbReference>
<dbReference type="InterPro" id="IPR022629">
    <property type="entry name" value="S-AdoMet_synt_central"/>
</dbReference>
<dbReference type="InterPro" id="IPR022628">
    <property type="entry name" value="S-AdoMet_synt_N"/>
</dbReference>
<dbReference type="InterPro" id="IPR002133">
    <property type="entry name" value="S-AdoMet_synthetase"/>
</dbReference>
<dbReference type="InterPro" id="IPR022636">
    <property type="entry name" value="S-AdoMet_synthetase_sfam"/>
</dbReference>
<dbReference type="NCBIfam" id="TIGR01034">
    <property type="entry name" value="metK"/>
    <property type="match status" value="1"/>
</dbReference>
<dbReference type="PANTHER" id="PTHR11964">
    <property type="entry name" value="S-ADENOSYLMETHIONINE SYNTHETASE"/>
    <property type="match status" value="1"/>
</dbReference>
<dbReference type="Pfam" id="PF02773">
    <property type="entry name" value="S-AdoMet_synt_C"/>
    <property type="match status" value="1"/>
</dbReference>
<dbReference type="Pfam" id="PF02772">
    <property type="entry name" value="S-AdoMet_synt_M"/>
    <property type="match status" value="1"/>
</dbReference>
<dbReference type="Pfam" id="PF00438">
    <property type="entry name" value="S-AdoMet_synt_N"/>
    <property type="match status" value="1"/>
</dbReference>
<dbReference type="PIRSF" id="PIRSF000497">
    <property type="entry name" value="MAT"/>
    <property type="match status" value="1"/>
</dbReference>
<dbReference type="SUPFAM" id="SSF55973">
    <property type="entry name" value="S-adenosylmethionine synthetase"/>
    <property type="match status" value="3"/>
</dbReference>
<dbReference type="PROSITE" id="PS00376">
    <property type="entry name" value="ADOMET_SYNTHASE_1"/>
    <property type="match status" value="1"/>
</dbReference>
<dbReference type="PROSITE" id="PS00377">
    <property type="entry name" value="ADOMET_SYNTHASE_2"/>
    <property type="match status" value="1"/>
</dbReference>
<keyword id="KW-0067">ATP-binding</keyword>
<keyword id="KW-0963">Cytoplasm</keyword>
<keyword id="KW-0460">Magnesium</keyword>
<keyword id="KW-0479">Metal-binding</keyword>
<keyword id="KW-0547">Nucleotide-binding</keyword>
<keyword id="KW-0554">One-carbon metabolism</keyword>
<keyword id="KW-0630">Potassium</keyword>
<keyword id="KW-0808">Transferase</keyword>
<accession>A5FJU1</accession>
<reference key="1">
    <citation type="journal article" date="2009" name="Appl. Environ. Microbiol.">
        <title>Novel features of the polysaccharide-digesting gliding bacterium Flavobacterium johnsoniae as revealed by genome sequence analysis.</title>
        <authorList>
            <person name="McBride M.J."/>
            <person name="Xie G."/>
            <person name="Martens E.C."/>
            <person name="Lapidus A."/>
            <person name="Henrissat B."/>
            <person name="Rhodes R.G."/>
            <person name="Goltsman E."/>
            <person name="Wang W."/>
            <person name="Xu J."/>
            <person name="Hunnicutt D.W."/>
            <person name="Staroscik A.M."/>
            <person name="Hoover T.R."/>
            <person name="Cheng Y.Q."/>
            <person name="Stein J.L."/>
        </authorList>
    </citation>
    <scope>NUCLEOTIDE SEQUENCE [LARGE SCALE GENOMIC DNA]</scope>
    <source>
        <strain>ATCC 17061 / DSM 2064 / JCM 8514 / BCRC 14874 / CCUG 350202 / NBRC 14942 / NCIMB 11054 / UW101</strain>
    </source>
</reference>
<organism>
    <name type="scientific">Flavobacterium johnsoniae (strain ATCC 17061 / DSM 2064 / JCM 8514 / BCRC 14874 / CCUG 350202 / NBRC 14942 / NCIMB 11054 / UW101)</name>
    <name type="common">Cytophaga johnsonae</name>
    <dbReference type="NCBI Taxonomy" id="376686"/>
    <lineage>
        <taxon>Bacteria</taxon>
        <taxon>Pseudomonadati</taxon>
        <taxon>Bacteroidota</taxon>
        <taxon>Flavobacteriia</taxon>
        <taxon>Flavobacteriales</taxon>
        <taxon>Flavobacteriaceae</taxon>
        <taxon>Flavobacterium</taxon>
    </lineage>
</organism>
<comment type="function">
    <text evidence="1">Catalyzes the formation of S-adenosylmethionine (AdoMet) from methionine and ATP. The overall synthetic reaction is composed of two sequential steps, AdoMet formation and the subsequent tripolyphosphate hydrolysis which occurs prior to release of AdoMet from the enzyme.</text>
</comment>
<comment type="catalytic activity">
    <reaction evidence="1">
        <text>L-methionine + ATP + H2O = S-adenosyl-L-methionine + phosphate + diphosphate</text>
        <dbReference type="Rhea" id="RHEA:21080"/>
        <dbReference type="ChEBI" id="CHEBI:15377"/>
        <dbReference type="ChEBI" id="CHEBI:30616"/>
        <dbReference type="ChEBI" id="CHEBI:33019"/>
        <dbReference type="ChEBI" id="CHEBI:43474"/>
        <dbReference type="ChEBI" id="CHEBI:57844"/>
        <dbReference type="ChEBI" id="CHEBI:59789"/>
        <dbReference type="EC" id="2.5.1.6"/>
    </reaction>
</comment>
<comment type="cofactor">
    <cofactor evidence="1">
        <name>Mg(2+)</name>
        <dbReference type="ChEBI" id="CHEBI:18420"/>
    </cofactor>
    <text evidence="1">Binds 2 divalent ions per subunit.</text>
</comment>
<comment type="cofactor">
    <cofactor evidence="1">
        <name>K(+)</name>
        <dbReference type="ChEBI" id="CHEBI:29103"/>
    </cofactor>
    <text evidence="1">Binds 1 potassium ion per subunit.</text>
</comment>
<comment type="pathway">
    <text evidence="1">Amino-acid biosynthesis; S-adenosyl-L-methionine biosynthesis; S-adenosyl-L-methionine from L-methionine: step 1/1.</text>
</comment>
<comment type="subunit">
    <text evidence="1">Homotetramer; dimer of dimers.</text>
</comment>
<comment type="subcellular location">
    <subcellularLocation>
        <location evidence="1">Cytoplasm</location>
    </subcellularLocation>
</comment>
<comment type="similarity">
    <text evidence="1">Belongs to the AdoMet synthase family.</text>
</comment>
<protein>
    <recommendedName>
        <fullName evidence="1">S-adenosylmethionine synthase</fullName>
        <shortName evidence="1">AdoMet synthase</shortName>
        <ecNumber evidence="1">2.5.1.6</ecNumber>
    </recommendedName>
    <alternativeName>
        <fullName evidence="1">MAT</fullName>
    </alternativeName>
    <alternativeName>
        <fullName evidence="1">Methionine adenosyltransferase</fullName>
    </alternativeName>
</protein>